<dbReference type="EC" id="2.5.1.6" evidence="1"/>
<dbReference type="EMBL" id="AE014295">
    <property type="protein sequence ID" value="AAN25569.1"/>
    <property type="molecule type" value="Genomic_DNA"/>
</dbReference>
<dbReference type="RefSeq" id="NP_696933.1">
    <property type="nucleotide sequence ID" value="NC_004307.2"/>
</dbReference>
<dbReference type="RefSeq" id="WP_011068839.1">
    <property type="nucleotide sequence ID" value="NC_004307.2"/>
</dbReference>
<dbReference type="SMR" id="Q8G3H4"/>
<dbReference type="STRING" id="206672.BL1786"/>
<dbReference type="EnsemblBacteria" id="AAN25569">
    <property type="protein sequence ID" value="AAN25569"/>
    <property type="gene ID" value="BL1786"/>
</dbReference>
<dbReference type="KEGG" id="blo:BL1786"/>
<dbReference type="PATRIC" id="fig|206672.9.peg.1839"/>
<dbReference type="HOGENOM" id="CLU_041802_1_1_11"/>
<dbReference type="OrthoDB" id="9801686at2"/>
<dbReference type="PhylomeDB" id="Q8G3H4"/>
<dbReference type="UniPathway" id="UPA00315">
    <property type="reaction ID" value="UER00080"/>
</dbReference>
<dbReference type="Proteomes" id="UP000000439">
    <property type="component" value="Chromosome"/>
</dbReference>
<dbReference type="GO" id="GO:0005737">
    <property type="term" value="C:cytoplasm"/>
    <property type="evidence" value="ECO:0007669"/>
    <property type="project" value="UniProtKB-SubCell"/>
</dbReference>
<dbReference type="GO" id="GO:0005524">
    <property type="term" value="F:ATP binding"/>
    <property type="evidence" value="ECO:0007669"/>
    <property type="project" value="UniProtKB-UniRule"/>
</dbReference>
<dbReference type="GO" id="GO:0000287">
    <property type="term" value="F:magnesium ion binding"/>
    <property type="evidence" value="ECO:0007669"/>
    <property type="project" value="UniProtKB-UniRule"/>
</dbReference>
<dbReference type="GO" id="GO:0004478">
    <property type="term" value="F:methionine adenosyltransferase activity"/>
    <property type="evidence" value="ECO:0007669"/>
    <property type="project" value="UniProtKB-UniRule"/>
</dbReference>
<dbReference type="GO" id="GO:0006730">
    <property type="term" value="P:one-carbon metabolic process"/>
    <property type="evidence" value="ECO:0007669"/>
    <property type="project" value="UniProtKB-KW"/>
</dbReference>
<dbReference type="GO" id="GO:0006556">
    <property type="term" value="P:S-adenosylmethionine biosynthetic process"/>
    <property type="evidence" value="ECO:0007669"/>
    <property type="project" value="UniProtKB-UniRule"/>
</dbReference>
<dbReference type="CDD" id="cd18079">
    <property type="entry name" value="S-AdoMet_synt"/>
    <property type="match status" value="1"/>
</dbReference>
<dbReference type="FunFam" id="3.30.300.10:FF:000003">
    <property type="entry name" value="S-adenosylmethionine synthase"/>
    <property type="match status" value="1"/>
</dbReference>
<dbReference type="FunFam" id="3.30.300.10:FF:000004">
    <property type="entry name" value="S-adenosylmethionine synthase"/>
    <property type="match status" value="1"/>
</dbReference>
<dbReference type="Gene3D" id="3.30.300.10">
    <property type="match status" value="3"/>
</dbReference>
<dbReference type="HAMAP" id="MF_00086">
    <property type="entry name" value="S_AdoMet_synth1"/>
    <property type="match status" value="1"/>
</dbReference>
<dbReference type="InterPro" id="IPR022631">
    <property type="entry name" value="ADOMET_SYNTHASE_CS"/>
</dbReference>
<dbReference type="InterPro" id="IPR022630">
    <property type="entry name" value="S-AdoMet_synt_C"/>
</dbReference>
<dbReference type="InterPro" id="IPR022629">
    <property type="entry name" value="S-AdoMet_synt_central"/>
</dbReference>
<dbReference type="InterPro" id="IPR022628">
    <property type="entry name" value="S-AdoMet_synt_N"/>
</dbReference>
<dbReference type="InterPro" id="IPR002133">
    <property type="entry name" value="S-AdoMet_synthetase"/>
</dbReference>
<dbReference type="InterPro" id="IPR022636">
    <property type="entry name" value="S-AdoMet_synthetase_sfam"/>
</dbReference>
<dbReference type="NCBIfam" id="TIGR01034">
    <property type="entry name" value="metK"/>
    <property type="match status" value="1"/>
</dbReference>
<dbReference type="PANTHER" id="PTHR11964">
    <property type="entry name" value="S-ADENOSYLMETHIONINE SYNTHETASE"/>
    <property type="match status" value="1"/>
</dbReference>
<dbReference type="Pfam" id="PF02773">
    <property type="entry name" value="S-AdoMet_synt_C"/>
    <property type="match status" value="1"/>
</dbReference>
<dbReference type="Pfam" id="PF02772">
    <property type="entry name" value="S-AdoMet_synt_M"/>
    <property type="match status" value="1"/>
</dbReference>
<dbReference type="Pfam" id="PF00438">
    <property type="entry name" value="S-AdoMet_synt_N"/>
    <property type="match status" value="1"/>
</dbReference>
<dbReference type="PIRSF" id="PIRSF000497">
    <property type="entry name" value="MAT"/>
    <property type="match status" value="1"/>
</dbReference>
<dbReference type="SUPFAM" id="SSF55973">
    <property type="entry name" value="S-adenosylmethionine synthetase"/>
    <property type="match status" value="3"/>
</dbReference>
<dbReference type="PROSITE" id="PS00376">
    <property type="entry name" value="ADOMET_SYNTHASE_1"/>
    <property type="match status" value="1"/>
</dbReference>
<dbReference type="PROSITE" id="PS00377">
    <property type="entry name" value="ADOMET_SYNTHASE_2"/>
    <property type="match status" value="1"/>
</dbReference>
<accession>Q8G3H4</accession>
<reference key="1">
    <citation type="journal article" date="2002" name="Proc. Natl. Acad. Sci. U.S.A.">
        <title>The genome sequence of Bifidobacterium longum reflects its adaptation to the human gastrointestinal tract.</title>
        <authorList>
            <person name="Schell M.A."/>
            <person name="Karmirantzou M."/>
            <person name="Snel B."/>
            <person name="Vilanova D."/>
            <person name="Berger B."/>
            <person name="Pessi G."/>
            <person name="Zwahlen M.-C."/>
            <person name="Desiere F."/>
            <person name="Bork P."/>
            <person name="Delley M."/>
            <person name="Pridmore R.D."/>
            <person name="Arigoni F."/>
        </authorList>
    </citation>
    <scope>NUCLEOTIDE SEQUENCE [LARGE SCALE GENOMIC DNA]</scope>
    <source>
        <strain>NCC 2705</strain>
    </source>
</reference>
<gene>
    <name evidence="1" type="primary">metK</name>
    <name type="ordered locus">BL1786</name>
</gene>
<name>METK_BIFLO</name>
<proteinExistence type="inferred from homology"/>
<protein>
    <recommendedName>
        <fullName evidence="1">S-adenosylmethionine synthase</fullName>
        <shortName evidence="1">AdoMet synthase</shortName>
        <ecNumber evidence="1">2.5.1.6</ecNumber>
    </recommendedName>
    <alternativeName>
        <fullName evidence="1">MAT</fullName>
    </alternativeName>
    <alternativeName>
        <fullName evidence="1">Methionine adenosyltransferase</fullName>
    </alternativeName>
</protein>
<sequence length="406" mass="43775">MTEEHRLISAESVTEGHPDKVCDQISDAILDDLLAQDSSSHVAVETSAATGVFLVFGEVTSEGYCDVQSKVRETLRNIGYTSSEVGLDADSCGVVVAITEQSAEINQGVARLTGDQETAASREERYEAQGAGDQGVMFGYATDETPTLMPLPIYLAHRLAFHLTEVRKSGEVPHLRPDGKTQVTIEYDDDDKPVRLDTVLISTQHDPEVTQDWLAVELKKHVIDPVLDEVLGSKVPHDNYRQLVNPTGSFILGGPAADAGLTGRKIIVDTYGGAAHHGGGAFSGKDPSKVDRSAAYATRWVAKNIVAAGLAHKVEIQIAYAIGVADPVSVNVETFGTEQGVTRGQIAAAVRKVFDLRPAAIIDELDLKRPIYLKTAAYGHFGRTDVEFPWEKTDKVEELKAAIAAE</sequence>
<organism>
    <name type="scientific">Bifidobacterium longum (strain NCC 2705)</name>
    <dbReference type="NCBI Taxonomy" id="206672"/>
    <lineage>
        <taxon>Bacteria</taxon>
        <taxon>Bacillati</taxon>
        <taxon>Actinomycetota</taxon>
        <taxon>Actinomycetes</taxon>
        <taxon>Bifidobacteriales</taxon>
        <taxon>Bifidobacteriaceae</taxon>
        <taxon>Bifidobacterium</taxon>
    </lineage>
</organism>
<feature type="chain" id="PRO_0000174495" description="S-adenosylmethionine synthase">
    <location>
        <begin position="1"/>
        <end position="406"/>
    </location>
</feature>
<feature type="region of interest" description="Flexible loop" evidence="1">
    <location>
        <begin position="101"/>
        <end position="111"/>
    </location>
</feature>
<feature type="binding site" description="in other chain" evidence="1">
    <location>
        <position position="17"/>
    </location>
    <ligand>
        <name>ATP</name>
        <dbReference type="ChEBI" id="CHEBI:30616"/>
        <note>ligand shared between two neighboring subunits</note>
    </ligand>
</feature>
<feature type="binding site" evidence="1">
    <location>
        <position position="19"/>
    </location>
    <ligand>
        <name>Mg(2+)</name>
        <dbReference type="ChEBI" id="CHEBI:18420"/>
    </ligand>
</feature>
<feature type="binding site" evidence="1">
    <location>
        <position position="45"/>
    </location>
    <ligand>
        <name>K(+)</name>
        <dbReference type="ChEBI" id="CHEBI:29103"/>
    </ligand>
</feature>
<feature type="binding site" description="in other chain" evidence="1">
    <location>
        <position position="58"/>
    </location>
    <ligand>
        <name>L-methionine</name>
        <dbReference type="ChEBI" id="CHEBI:57844"/>
        <note>ligand shared between two neighboring subunits</note>
    </ligand>
</feature>
<feature type="binding site" description="in other chain" evidence="1">
    <location>
        <position position="101"/>
    </location>
    <ligand>
        <name>L-methionine</name>
        <dbReference type="ChEBI" id="CHEBI:57844"/>
        <note>ligand shared between two neighboring subunits</note>
    </ligand>
</feature>
<feature type="binding site" description="in other chain" evidence="1">
    <location>
        <begin position="178"/>
        <end position="180"/>
    </location>
    <ligand>
        <name>ATP</name>
        <dbReference type="ChEBI" id="CHEBI:30616"/>
        <note>ligand shared between two neighboring subunits</note>
    </ligand>
</feature>
<feature type="binding site" evidence="1">
    <location>
        <position position="258"/>
    </location>
    <ligand>
        <name>ATP</name>
        <dbReference type="ChEBI" id="CHEBI:30616"/>
        <note>ligand shared between two neighboring subunits</note>
    </ligand>
</feature>
<feature type="binding site" evidence="1">
    <location>
        <position position="258"/>
    </location>
    <ligand>
        <name>L-methionine</name>
        <dbReference type="ChEBI" id="CHEBI:57844"/>
        <note>ligand shared between two neighboring subunits</note>
    </ligand>
</feature>
<feature type="binding site" description="in other chain" evidence="1">
    <location>
        <begin position="264"/>
        <end position="265"/>
    </location>
    <ligand>
        <name>ATP</name>
        <dbReference type="ChEBI" id="CHEBI:30616"/>
        <note>ligand shared between two neighboring subunits</note>
    </ligand>
</feature>
<feature type="binding site" evidence="1">
    <location>
        <position position="281"/>
    </location>
    <ligand>
        <name>ATP</name>
        <dbReference type="ChEBI" id="CHEBI:30616"/>
        <note>ligand shared between two neighboring subunits</note>
    </ligand>
</feature>
<feature type="binding site" evidence="1">
    <location>
        <position position="285"/>
    </location>
    <ligand>
        <name>ATP</name>
        <dbReference type="ChEBI" id="CHEBI:30616"/>
        <note>ligand shared between two neighboring subunits</note>
    </ligand>
</feature>
<feature type="binding site" description="in other chain" evidence="1">
    <location>
        <position position="289"/>
    </location>
    <ligand>
        <name>L-methionine</name>
        <dbReference type="ChEBI" id="CHEBI:57844"/>
        <note>ligand shared between two neighboring subunits</note>
    </ligand>
</feature>
<keyword id="KW-0067">ATP-binding</keyword>
<keyword id="KW-0963">Cytoplasm</keyword>
<keyword id="KW-0460">Magnesium</keyword>
<keyword id="KW-0479">Metal-binding</keyword>
<keyword id="KW-0547">Nucleotide-binding</keyword>
<keyword id="KW-0554">One-carbon metabolism</keyword>
<keyword id="KW-0630">Potassium</keyword>
<keyword id="KW-1185">Reference proteome</keyword>
<keyword id="KW-0808">Transferase</keyword>
<comment type="function">
    <text evidence="1">Catalyzes the formation of S-adenosylmethionine (AdoMet) from methionine and ATP. The overall synthetic reaction is composed of two sequential steps, AdoMet formation and the subsequent tripolyphosphate hydrolysis which occurs prior to release of AdoMet from the enzyme.</text>
</comment>
<comment type="catalytic activity">
    <reaction evidence="1">
        <text>L-methionine + ATP + H2O = S-adenosyl-L-methionine + phosphate + diphosphate</text>
        <dbReference type="Rhea" id="RHEA:21080"/>
        <dbReference type="ChEBI" id="CHEBI:15377"/>
        <dbReference type="ChEBI" id="CHEBI:30616"/>
        <dbReference type="ChEBI" id="CHEBI:33019"/>
        <dbReference type="ChEBI" id="CHEBI:43474"/>
        <dbReference type="ChEBI" id="CHEBI:57844"/>
        <dbReference type="ChEBI" id="CHEBI:59789"/>
        <dbReference type="EC" id="2.5.1.6"/>
    </reaction>
</comment>
<comment type="cofactor">
    <cofactor evidence="1">
        <name>Mg(2+)</name>
        <dbReference type="ChEBI" id="CHEBI:18420"/>
    </cofactor>
    <text evidence="1">Binds 2 divalent ions per subunit.</text>
</comment>
<comment type="cofactor">
    <cofactor evidence="1">
        <name>K(+)</name>
        <dbReference type="ChEBI" id="CHEBI:29103"/>
    </cofactor>
    <text evidence="1">Binds 1 potassium ion per subunit.</text>
</comment>
<comment type="pathway">
    <text evidence="1">Amino-acid biosynthesis; S-adenosyl-L-methionine biosynthesis; S-adenosyl-L-methionine from L-methionine: step 1/1.</text>
</comment>
<comment type="subunit">
    <text evidence="1">Homotetramer; dimer of dimers.</text>
</comment>
<comment type="subcellular location">
    <subcellularLocation>
        <location evidence="1">Cytoplasm</location>
    </subcellularLocation>
</comment>
<comment type="similarity">
    <text evidence="1">Belongs to the AdoMet synthase family.</text>
</comment>
<evidence type="ECO:0000255" key="1">
    <source>
        <dbReference type="HAMAP-Rule" id="MF_00086"/>
    </source>
</evidence>